<protein>
    <recommendedName>
        <fullName evidence="1">Large ribosomal subunit protein bL9</fullName>
    </recommendedName>
    <alternativeName>
        <fullName evidence="2">50S ribosomal protein L9</fullName>
    </alternativeName>
</protein>
<proteinExistence type="inferred from homology"/>
<accession>A3Q8M9</accession>
<sequence length="152" mass="16009">MKLILTAEVDHLGEPGDTVEVKDGYGRNYLLPRGLAIVASRGAQRQADDIRRARELKTVKGLEHANEIKTALEALDTVELAVNASADTGKLFGSVTATDVVAAIKKAGGPNLDKRTVALPKAHIKSLGTHSVSVRLHPGVEASVSLNVVAES</sequence>
<name>RL9_MYCSJ</name>
<evidence type="ECO:0000255" key="1">
    <source>
        <dbReference type="HAMAP-Rule" id="MF_00503"/>
    </source>
</evidence>
<evidence type="ECO:0000305" key="2"/>
<dbReference type="EMBL" id="CP000580">
    <property type="protein sequence ID" value="ABO01507.1"/>
    <property type="molecule type" value="Genomic_DNA"/>
</dbReference>
<dbReference type="SMR" id="A3Q8M9"/>
<dbReference type="KEGG" id="mjl:Mjls_5743"/>
<dbReference type="HOGENOM" id="CLU_078938_5_1_11"/>
<dbReference type="BioCyc" id="MSP164757:G1G8C-5805-MONOMER"/>
<dbReference type="GO" id="GO:1990904">
    <property type="term" value="C:ribonucleoprotein complex"/>
    <property type="evidence" value="ECO:0007669"/>
    <property type="project" value="UniProtKB-KW"/>
</dbReference>
<dbReference type="GO" id="GO:0005840">
    <property type="term" value="C:ribosome"/>
    <property type="evidence" value="ECO:0007669"/>
    <property type="project" value="UniProtKB-KW"/>
</dbReference>
<dbReference type="GO" id="GO:0019843">
    <property type="term" value="F:rRNA binding"/>
    <property type="evidence" value="ECO:0007669"/>
    <property type="project" value="UniProtKB-UniRule"/>
</dbReference>
<dbReference type="GO" id="GO:0003735">
    <property type="term" value="F:structural constituent of ribosome"/>
    <property type="evidence" value="ECO:0007669"/>
    <property type="project" value="InterPro"/>
</dbReference>
<dbReference type="GO" id="GO:0006412">
    <property type="term" value="P:translation"/>
    <property type="evidence" value="ECO:0007669"/>
    <property type="project" value="UniProtKB-UniRule"/>
</dbReference>
<dbReference type="FunFam" id="3.40.5.10:FF:000003">
    <property type="entry name" value="50S ribosomal protein L9"/>
    <property type="match status" value="1"/>
</dbReference>
<dbReference type="Gene3D" id="3.10.430.100">
    <property type="entry name" value="Ribosomal protein L9, C-terminal domain"/>
    <property type="match status" value="1"/>
</dbReference>
<dbReference type="Gene3D" id="3.40.5.10">
    <property type="entry name" value="Ribosomal protein L9, N-terminal domain"/>
    <property type="match status" value="1"/>
</dbReference>
<dbReference type="HAMAP" id="MF_00503">
    <property type="entry name" value="Ribosomal_bL9"/>
    <property type="match status" value="1"/>
</dbReference>
<dbReference type="InterPro" id="IPR000244">
    <property type="entry name" value="Ribosomal_bL9"/>
</dbReference>
<dbReference type="InterPro" id="IPR009027">
    <property type="entry name" value="Ribosomal_bL9/RNase_H1_N"/>
</dbReference>
<dbReference type="InterPro" id="IPR020594">
    <property type="entry name" value="Ribosomal_bL9_bac/chp"/>
</dbReference>
<dbReference type="InterPro" id="IPR020069">
    <property type="entry name" value="Ribosomal_bL9_C"/>
</dbReference>
<dbReference type="InterPro" id="IPR036791">
    <property type="entry name" value="Ribosomal_bL9_C_sf"/>
</dbReference>
<dbReference type="InterPro" id="IPR020070">
    <property type="entry name" value="Ribosomal_bL9_N"/>
</dbReference>
<dbReference type="InterPro" id="IPR036935">
    <property type="entry name" value="Ribosomal_bL9_N_sf"/>
</dbReference>
<dbReference type="NCBIfam" id="TIGR00158">
    <property type="entry name" value="L9"/>
    <property type="match status" value="1"/>
</dbReference>
<dbReference type="PANTHER" id="PTHR21368">
    <property type="entry name" value="50S RIBOSOMAL PROTEIN L9"/>
    <property type="match status" value="1"/>
</dbReference>
<dbReference type="Pfam" id="PF03948">
    <property type="entry name" value="Ribosomal_L9_C"/>
    <property type="match status" value="1"/>
</dbReference>
<dbReference type="Pfam" id="PF01281">
    <property type="entry name" value="Ribosomal_L9_N"/>
    <property type="match status" value="1"/>
</dbReference>
<dbReference type="SUPFAM" id="SSF55658">
    <property type="entry name" value="L9 N-domain-like"/>
    <property type="match status" value="1"/>
</dbReference>
<dbReference type="SUPFAM" id="SSF55653">
    <property type="entry name" value="Ribosomal protein L9 C-domain"/>
    <property type="match status" value="1"/>
</dbReference>
<dbReference type="PROSITE" id="PS00651">
    <property type="entry name" value="RIBOSOMAL_L9"/>
    <property type="match status" value="1"/>
</dbReference>
<feature type="chain" id="PRO_1000014812" description="Large ribosomal subunit protein bL9">
    <location>
        <begin position="1"/>
        <end position="152"/>
    </location>
</feature>
<organism>
    <name type="scientific">Mycobacterium sp. (strain JLS)</name>
    <dbReference type="NCBI Taxonomy" id="164757"/>
    <lineage>
        <taxon>Bacteria</taxon>
        <taxon>Bacillati</taxon>
        <taxon>Actinomycetota</taxon>
        <taxon>Actinomycetes</taxon>
        <taxon>Mycobacteriales</taxon>
        <taxon>Mycobacteriaceae</taxon>
        <taxon>Mycobacterium</taxon>
    </lineage>
</organism>
<comment type="function">
    <text evidence="1">Binds to the 23S rRNA.</text>
</comment>
<comment type="similarity">
    <text evidence="1">Belongs to the bacterial ribosomal protein bL9 family.</text>
</comment>
<keyword id="KW-0687">Ribonucleoprotein</keyword>
<keyword id="KW-0689">Ribosomal protein</keyword>
<keyword id="KW-0694">RNA-binding</keyword>
<keyword id="KW-0699">rRNA-binding</keyword>
<gene>
    <name evidence="1" type="primary">rplI</name>
    <name type="ordered locus">Mjls_5743</name>
</gene>
<reference key="1">
    <citation type="submission" date="2007-02" db="EMBL/GenBank/DDBJ databases">
        <title>Complete sequence of Mycobacterium sp. JLS.</title>
        <authorList>
            <consortium name="US DOE Joint Genome Institute"/>
            <person name="Copeland A."/>
            <person name="Lucas S."/>
            <person name="Lapidus A."/>
            <person name="Barry K."/>
            <person name="Detter J.C."/>
            <person name="Glavina del Rio T."/>
            <person name="Hammon N."/>
            <person name="Israni S."/>
            <person name="Dalin E."/>
            <person name="Tice H."/>
            <person name="Pitluck S."/>
            <person name="Chain P."/>
            <person name="Malfatti S."/>
            <person name="Shin M."/>
            <person name="Vergez L."/>
            <person name="Schmutz J."/>
            <person name="Larimer F."/>
            <person name="Land M."/>
            <person name="Hauser L."/>
            <person name="Kyrpides N."/>
            <person name="Mikhailova N."/>
            <person name="Miller C.D."/>
            <person name="Anderson A.J."/>
            <person name="Sims R.C."/>
            <person name="Richardson P."/>
        </authorList>
    </citation>
    <scope>NUCLEOTIDE SEQUENCE [LARGE SCALE GENOMIC DNA]</scope>
    <source>
        <strain>JLS</strain>
    </source>
</reference>